<comment type="function">
    <text evidence="1">Major role in the synthesis of nucleoside triphosphates other than ATP. The ATP gamma phosphate is transferred to the NDP beta phosphate via a ping-pong mechanism, using a phosphorylated active-site intermediate.</text>
</comment>
<comment type="catalytic activity">
    <reaction evidence="1">
        <text>a 2'-deoxyribonucleoside 5'-diphosphate + ATP = a 2'-deoxyribonucleoside 5'-triphosphate + ADP</text>
        <dbReference type="Rhea" id="RHEA:44640"/>
        <dbReference type="ChEBI" id="CHEBI:30616"/>
        <dbReference type="ChEBI" id="CHEBI:61560"/>
        <dbReference type="ChEBI" id="CHEBI:73316"/>
        <dbReference type="ChEBI" id="CHEBI:456216"/>
        <dbReference type="EC" id="2.7.4.6"/>
    </reaction>
</comment>
<comment type="catalytic activity">
    <reaction evidence="1">
        <text>a ribonucleoside 5'-diphosphate + ATP = a ribonucleoside 5'-triphosphate + ADP</text>
        <dbReference type="Rhea" id="RHEA:18113"/>
        <dbReference type="ChEBI" id="CHEBI:30616"/>
        <dbReference type="ChEBI" id="CHEBI:57930"/>
        <dbReference type="ChEBI" id="CHEBI:61557"/>
        <dbReference type="ChEBI" id="CHEBI:456216"/>
        <dbReference type="EC" id="2.7.4.6"/>
    </reaction>
</comment>
<comment type="cofactor">
    <cofactor evidence="1">
        <name>Mg(2+)</name>
        <dbReference type="ChEBI" id="CHEBI:18420"/>
    </cofactor>
</comment>
<comment type="subunit">
    <text evidence="1">Homotetramer.</text>
</comment>
<comment type="subcellular location">
    <subcellularLocation>
        <location evidence="1">Cytoplasm</location>
    </subcellularLocation>
</comment>
<comment type="similarity">
    <text evidence="1">Belongs to the NDK family.</text>
</comment>
<keyword id="KW-0067">ATP-binding</keyword>
<keyword id="KW-0963">Cytoplasm</keyword>
<keyword id="KW-0418">Kinase</keyword>
<keyword id="KW-0460">Magnesium</keyword>
<keyword id="KW-0479">Metal-binding</keyword>
<keyword id="KW-0546">Nucleotide metabolism</keyword>
<keyword id="KW-0547">Nucleotide-binding</keyword>
<keyword id="KW-0597">Phosphoprotein</keyword>
<keyword id="KW-0808">Transferase</keyword>
<proteinExistence type="inferred from homology"/>
<dbReference type="EC" id="2.7.4.6" evidence="1"/>
<dbReference type="EMBL" id="AP009324">
    <property type="protein sequence ID" value="BAF78340.1"/>
    <property type="molecule type" value="Genomic_DNA"/>
</dbReference>
<dbReference type="RefSeq" id="WP_000442480.1">
    <property type="nucleotide sequence ID" value="NZ_CTYB01000006.1"/>
</dbReference>
<dbReference type="SMR" id="A7X2H3"/>
<dbReference type="GeneID" id="66839658"/>
<dbReference type="KEGG" id="saw:SAHV_1457"/>
<dbReference type="HOGENOM" id="CLU_060216_6_3_9"/>
<dbReference type="GO" id="GO:0005737">
    <property type="term" value="C:cytoplasm"/>
    <property type="evidence" value="ECO:0007669"/>
    <property type="project" value="UniProtKB-SubCell"/>
</dbReference>
<dbReference type="GO" id="GO:0005524">
    <property type="term" value="F:ATP binding"/>
    <property type="evidence" value="ECO:0007669"/>
    <property type="project" value="UniProtKB-UniRule"/>
</dbReference>
<dbReference type="GO" id="GO:0046872">
    <property type="term" value="F:metal ion binding"/>
    <property type="evidence" value="ECO:0007669"/>
    <property type="project" value="UniProtKB-KW"/>
</dbReference>
<dbReference type="GO" id="GO:0004550">
    <property type="term" value="F:nucleoside diphosphate kinase activity"/>
    <property type="evidence" value="ECO:0007669"/>
    <property type="project" value="UniProtKB-UniRule"/>
</dbReference>
<dbReference type="GO" id="GO:0006241">
    <property type="term" value="P:CTP biosynthetic process"/>
    <property type="evidence" value="ECO:0007669"/>
    <property type="project" value="UniProtKB-UniRule"/>
</dbReference>
<dbReference type="GO" id="GO:0006183">
    <property type="term" value="P:GTP biosynthetic process"/>
    <property type="evidence" value="ECO:0007669"/>
    <property type="project" value="UniProtKB-UniRule"/>
</dbReference>
<dbReference type="GO" id="GO:0006228">
    <property type="term" value="P:UTP biosynthetic process"/>
    <property type="evidence" value="ECO:0007669"/>
    <property type="project" value="UniProtKB-UniRule"/>
</dbReference>
<dbReference type="CDD" id="cd04413">
    <property type="entry name" value="NDPk_I"/>
    <property type="match status" value="1"/>
</dbReference>
<dbReference type="FunFam" id="3.30.70.141:FF:000002">
    <property type="entry name" value="Nucleoside diphosphate kinase"/>
    <property type="match status" value="1"/>
</dbReference>
<dbReference type="Gene3D" id="3.30.70.141">
    <property type="entry name" value="Nucleoside diphosphate kinase-like domain"/>
    <property type="match status" value="1"/>
</dbReference>
<dbReference type="HAMAP" id="MF_00451">
    <property type="entry name" value="NDP_kinase"/>
    <property type="match status" value="1"/>
</dbReference>
<dbReference type="InterPro" id="IPR034907">
    <property type="entry name" value="NDK-like_dom"/>
</dbReference>
<dbReference type="InterPro" id="IPR036850">
    <property type="entry name" value="NDK-like_dom_sf"/>
</dbReference>
<dbReference type="InterPro" id="IPR001564">
    <property type="entry name" value="Nucleoside_diP_kinase"/>
</dbReference>
<dbReference type="InterPro" id="IPR023005">
    <property type="entry name" value="Nucleoside_diP_kinase_AS"/>
</dbReference>
<dbReference type="NCBIfam" id="NF001908">
    <property type="entry name" value="PRK00668.1"/>
    <property type="match status" value="1"/>
</dbReference>
<dbReference type="PANTHER" id="PTHR11349">
    <property type="entry name" value="NUCLEOSIDE DIPHOSPHATE KINASE"/>
    <property type="match status" value="1"/>
</dbReference>
<dbReference type="Pfam" id="PF00334">
    <property type="entry name" value="NDK"/>
    <property type="match status" value="1"/>
</dbReference>
<dbReference type="PRINTS" id="PR01243">
    <property type="entry name" value="NUCDPKINASE"/>
</dbReference>
<dbReference type="SMART" id="SM00562">
    <property type="entry name" value="NDK"/>
    <property type="match status" value="1"/>
</dbReference>
<dbReference type="SUPFAM" id="SSF54919">
    <property type="entry name" value="Nucleoside diphosphate kinase, NDK"/>
    <property type="match status" value="1"/>
</dbReference>
<dbReference type="PROSITE" id="PS00469">
    <property type="entry name" value="NDPK"/>
    <property type="match status" value="1"/>
</dbReference>
<dbReference type="PROSITE" id="PS51374">
    <property type="entry name" value="NDPK_LIKE"/>
    <property type="match status" value="1"/>
</dbReference>
<accession>A7X2H3</accession>
<gene>
    <name evidence="1" type="primary">ndk</name>
    <name type="ordered locus">SAHV_1457</name>
</gene>
<feature type="chain" id="PRO_1000026301" description="Nucleoside diphosphate kinase">
    <location>
        <begin position="1"/>
        <end position="149"/>
    </location>
</feature>
<feature type="active site" description="Pros-phosphohistidine intermediate" evidence="1">
    <location>
        <position position="115"/>
    </location>
</feature>
<feature type="binding site" evidence="1">
    <location>
        <position position="9"/>
    </location>
    <ligand>
        <name>ATP</name>
        <dbReference type="ChEBI" id="CHEBI:30616"/>
    </ligand>
</feature>
<feature type="binding site" evidence="1">
    <location>
        <position position="57"/>
    </location>
    <ligand>
        <name>ATP</name>
        <dbReference type="ChEBI" id="CHEBI:30616"/>
    </ligand>
</feature>
<feature type="binding site" evidence="1">
    <location>
        <position position="85"/>
    </location>
    <ligand>
        <name>ATP</name>
        <dbReference type="ChEBI" id="CHEBI:30616"/>
    </ligand>
</feature>
<feature type="binding site" evidence="1">
    <location>
        <position position="91"/>
    </location>
    <ligand>
        <name>ATP</name>
        <dbReference type="ChEBI" id="CHEBI:30616"/>
    </ligand>
</feature>
<feature type="binding site" evidence="1">
    <location>
        <position position="102"/>
    </location>
    <ligand>
        <name>ATP</name>
        <dbReference type="ChEBI" id="CHEBI:30616"/>
    </ligand>
</feature>
<feature type="binding site" evidence="1">
    <location>
        <position position="112"/>
    </location>
    <ligand>
        <name>ATP</name>
        <dbReference type="ChEBI" id="CHEBI:30616"/>
    </ligand>
</feature>
<protein>
    <recommendedName>
        <fullName evidence="1">Nucleoside diphosphate kinase</fullName>
        <shortName evidence="1">NDK</shortName>
        <shortName evidence="1">NDP kinase</shortName>
        <ecNumber evidence="1">2.7.4.6</ecNumber>
    </recommendedName>
    <alternativeName>
        <fullName evidence="1">Nucleoside-2-P kinase</fullName>
    </alternativeName>
</protein>
<evidence type="ECO:0000255" key="1">
    <source>
        <dbReference type="HAMAP-Rule" id="MF_00451"/>
    </source>
</evidence>
<name>NDK_STAA1</name>
<sequence>MERTFLMIKPDAVQRNLIGEVISRIERKGLKLVGGKLMQVPMELAETHYGEHQGKPFYNDLISFITSAPVFAMVVEGEDAVNVSRHIIGSTNPSEASPGSIRGDLGLTVGRNIIHGSDSLESAEREINLWFNENEITSYASPRDAWLYE</sequence>
<reference key="1">
    <citation type="journal article" date="2008" name="Antimicrob. Agents Chemother.">
        <title>Mutated response regulator graR is responsible for phenotypic conversion of Staphylococcus aureus from heterogeneous vancomycin-intermediate resistance to vancomycin-intermediate resistance.</title>
        <authorList>
            <person name="Neoh H.-M."/>
            <person name="Cui L."/>
            <person name="Yuzawa H."/>
            <person name="Takeuchi F."/>
            <person name="Matsuo M."/>
            <person name="Hiramatsu K."/>
        </authorList>
    </citation>
    <scope>NUCLEOTIDE SEQUENCE [LARGE SCALE GENOMIC DNA]</scope>
    <source>
        <strain>Mu3 / ATCC 700698</strain>
    </source>
</reference>
<organism>
    <name type="scientific">Staphylococcus aureus (strain Mu3 / ATCC 700698)</name>
    <dbReference type="NCBI Taxonomy" id="418127"/>
    <lineage>
        <taxon>Bacteria</taxon>
        <taxon>Bacillati</taxon>
        <taxon>Bacillota</taxon>
        <taxon>Bacilli</taxon>
        <taxon>Bacillales</taxon>
        <taxon>Staphylococcaceae</taxon>
        <taxon>Staphylococcus</taxon>
    </lineage>
</organism>